<reference key="1">
    <citation type="submission" date="2007-05" db="EMBL/GenBank/DDBJ databases">
        <title>Complete sequence of chromosome of Psychrobacter sp. PRwf-1.</title>
        <authorList>
            <consortium name="US DOE Joint Genome Institute"/>
            <person name="Copeland A."/>
            <person name="Lucas S."/>
            <person name="Lapidus A."/>
            <person name="Barry K."/>
            <person name="Detter J.C."/>
            <person name="Glavina del Rio T."/>
            <person name="Hammon N."/>
            <person name="Israni S."/>
            <person name="Dalin E."/>
            <person name="Tice H."/>
            <person name="Pitluck S."/>
            <person name="Chain P."/>
            <person name="Malfatti S."/>
            <person name="Shin M."/>
            <person name="Vergez L."/>
            <person name="Schmutz J."/>
            <person name="Larimer F."/>
            <person name="Land M."/>
            <person name="Hauser L."/>
            <person name="Kyrpides N."/>
            <person name="Kim E."/>
            <person name="Tiedje J."/>
            <person name="Richardson P."/>
        </authorList>
    </citation>
    <scope>NUCLEOTIDE SEQUENCE [LARGE SCALE GENOMIC DNA]</scope>
    <source>
        <strain>PRwf-1</strain>
    </source>
</reference>
<keyword id="KW-0665">Pyrimidine biosynthesis</keyword>
<keyword id="KW-0808">Transferase</keyword>
<name>PYRB_PSYWF</name>
<dbReference type="EC" id="2.1.3.2" evidence="1"/>
<dbReference type="EMBL" id="CP000713">
    <property type="protein sequence ID" value="ABQ94796.1"/>
    <property type="molecule type" value="Genomic_DNA"/>
</dbReference>
<dbReference type="SMR" id="A5WGK5"/>
<dbReference type="STRING" id="349106.PsycPRwf_1856"/>
<dbReference type="KEGG" id="prw:PsycPRwf_1856"/>
<dbReference type="eggNOG" id="COG0540">
    <property type="taxonomic scope" value="Bacteria"/>
</dbReference>
<dbReference type="HOGENOM" id="CLU_043846_2_0_6"/>
<dbReference type="UniPathway" id="UPA00070">
    <property type="reaction ID" value="UER00116"/>
</dbReference>
<dbReference type="GO" id="GO:0005829">
    <property type="term" value="C:cytosol"/>
    <property type="evidence" value="ECO:0007669"/>
    <property type="project" value="TreeGrafter"/>
</dbReference>
<dbReference type="GO" id="GO:0016597">
    <property type="term" value="F:amino acid binding"/>
    <property type="evidence" value="ECO:0007669"/>
    <property type="project" value="InterPro"/>
</dbReference>
<dbReference type="GO" id="GO:0004070">
    <property type="term" value="F:aspartate carbamoyltransferase activity"/>
    <property type="evidence" value="ECO:0007669"/>
    <property type="project" value="UniProtKB-UniRule"/>
</dbReference>
<dbReference type="GO" id="GO:0006207">
    <property type="term" value="P:'de novo' pyrimidine nucleobase biosynthetic process"/>
    <property type="evidence" value="ECO:0007669"/>
    <property type="project" value="InterPro"/>
</dbReference>
<dbReference type="GO" id="GO:0044205">
    <property type="term" value="P:'de novo' UMP biosynthetic process"/>
    <property type="evidence" value="ECO:0007669"/>
    <property type="project" value="UniProtKB-UniRule"/>
</dbReference>
<dbReference type="GO" id="GO:0006520">
    <property type="term" value="P:amino acid metabolic process"/>
    <property type="evidence" value="ECO:0007669"/>
    <property type="project" value="InterPro"/>
</dbReference>
<dbReference type="Gene3D" id="3.40.50.1370">
    <property type="entry name" value="Aspartate/ornithine carbamoyltransferase"/>
    <property type="match status" value="2"/>
</dbReference>
<dbReference type="HAMAP" id="MF_00001">
    <property type="entry name" value="Asp_carb_tr"/>
    <property type="match status" value="1"/>
</dbReference>
<dbReference type="InterPro" id="IPR006132">
    <property type="entry name" value="Asp/Orn_carbamoyltranf_P-bd"/>
</dbReference>
<dbReference type="InterPro" id="IPR006130">
    <property type="entry name" value="Asp/Orn_carbamoylTrfase"/>
</dbReference>
<dbReference type="InterPro" id="IPR036901">
    <property type="entry name" value="Asp/Orn_carbamoylTrfase_sf"/>
</dbReference>
<dbReference type="InterPro" id="IPR002082">
    <property type="entry name" value="Asp_carbamoyltransf"/>
</dbReference>
<dbReference type="InterPro" id="IPR006131">
    <property type="entry name" value="Asp_carbamoyltransf_Asp/Orn-bd"/>
</dbReference>
<dbReference type="NCBIfam" id="TIGR00670">
    <property type="entry name" value="asp_carb_tr"/>
    <property type="match status" value="1"/>
</dbReference>
<dbReference type="NCBIfam" id="NF002032">
    <property type="entry name" value="PRK00856.1"/>
    <property type="match status" value="1"/>
</dbReference>
<dbReference type="PANTHER" id="PTHR45753:SF6">
    <property type="entry name" value="ASPARTATE CARBAMOYLTRANSFERASE"/>
    <property type="match status" value="1"/>
</dbReference>
<dbReference type="PANTHER" id="PTHR45753">
    <property type="entry name" value="ORNITHINE CARBAMOYLTRANSFERASE, MITOCHONDRIAL"/>
    <property type="match status" value="1"/>
</dbReference>
<dbReference type="Pfam" id="PF00185">
    <property type="entry name" value="OTCace"/>
    <property type="match status" value="1"/>
</dbReference>
<dbReference type="Pfam" id="PF02729">
    <property type="entry name" value="OTCace_N"/>
    <property type="match status" value="1"/>
</dbReference>
<dbReference type="PRINTS" id="PR00100">
    <property type="entry name" value="AOTCASE"/>
</dbReference>
<dbReference type="PRINTS" id="PR00101">
    <property type="entry name" value="ATCASE"/>
</dbReference>
<dbReference type="SUPFAM" id="SSF53671">
    <property type="entry name" value="Aspartate/ornithine carbamoyltransferase"/>
    <property type="match status" value="1"/>
</dbReference>
<dbReference type="PROSITE" id="PS00097">
    <property type="entry name" value="CARBAMOYLTRANSFERASE"/>
    <property type="match status" value="1"/>
</dbReference>
<protein>
    <recommendedName>
        <fullName evidence="1">Aspartate carbamoyltransferase catalytic subunit</fullName>
        <ecNumber evidence="1">2.1.3.2</ecNumber>
    </recommendedName>
    <alternativeName>
        <fullName evidence="1">Aspartate transcarbamylase</fullName>
        <shortName evidence="1">ATCase</shortName>
    </alternativeName>
</protein>
<gene>
    <name evidence="1" type="primary">pyrB</name>
    <name type="ordered locus">PsycPRwf_1856</name>
</gene>
<proteinExistence type="inferred from homology"/>
<feature type="chain" id="PRO_0000329115" description="Aspartate carbamoyltransferase catalytic subunit">
    <location>
        <begin position="1"/>
        <end position="362"/>
    </location>
</feature>
<feature type="region of interest" description="Disordered" evidence="2">
    <location>
        <begin position="1"/>
        <end position="22"/>
    </location>
</feature>
<feature type="compositionally biased region" description="Low complexity" evidence="2">
    <location>
        <begin position="7"/>
        <end position="20"/>
    </location>
</feature>
<feature type="binding site" evidence="1">
    <location>
        <position position="100"/>
    </location>
    <ligand>
        <name>carbamoyl phosphate</name>
        <dbReference type="ChEBI" id="CHEBI:58228"/>
    </ligand>
</feature>
<feature type="binding site" evidence="1">
    <location>
        <position position="101"/>
    </location>
    <ligand>
        <name>carbamoyl phosphate</name>
        <dbReference type="ChEBI" id="CHEBI:58228"/>
    </ligand>
</feature>
<feature type="binding site" evidence="1">
    <location>
        <position position="128"/>
    </location>
    <ligand>
        <name>L-aspartate</name>
        <dbReference type="ChEBI" id="CHEBI:29991"/>
    </ligand>
</feature>
<feature type="binding site" evidence="1">
    <location>
        <position position="150"/>
    </location>
    <ligand>
        <name>carbamoyl phosphate</name>
        <dbReference type="ChEBI" id="CHEBI:58228"/>
    </ligand>
</feature>
<feature type="binding site" evidence="1">
    <location>
        <position position="180"/>
    </location>
    <ligand>
        <name>carbamoyl phosphate</name>
        <dbReference type="ChEBI" id="CHEBI:58228"/>
    </ligand>
</feature>
<feature type="binding site" evidence="1">
    <location>
        <position position="183"/>
    </location>
    <ligand>
        <name>carbamoyl phosphate</name>
        <dbReference type="ChEBI" id="CHEBI:58228"/>
    </ligand>
</feature>
<feature type="binding site" evidence="1">
    <location>
        <position position="214"/>
    </location>
    <ligand>
        <name>L-aspartate</name>
        <dbReference type="ChEBI" id="CHEBI:29991"/>
    </ligand>
</feature>
<feature type="binding site" evidence="1">
    <location>
        <position position="269"/>
    </location>
    <ligand>
        <name>L-aspartate</name>
        <dbReference type="ChEBI" id="CHEBI:29991"/>
    </ligand>
</feature>
<feature type="binding site" evidence="1">
    <location>
        <position position="310"/>
    </location>
    <ligand>
        <name>carbamoyl phosphate</name>
        <dbReference type="ChEBI" id="CHEBI:58228"/>
    </ligand>
</feature>
<feature type="binding site" evidence="1">
    <location>
        <position position="311"/>
    </location>
    <ligand>
        <name>carbamoyl phosphate</name>
        <dbReference type="ChEBI" id="CHEBI:58228"/>
    </ligand>
</feature>
<sequence>MPKTAMTDSTSKTSTNTASSDMAAEFDSTTARLNASLSKPQLNADGHLRHFLGIEGLSRAQLLAIIHKAESFFDDKGQLINSPELEGCTVMNLFFEPSTRTRTTFEVAEKRLGANVLNIDIARSSTQKGESLRDTLWNLQAMTADIFVVRHSASGAAHFMATEVTPDIAIINGGDGWHAHPTQAMLDMLTIHREAPRPFEELTVAIIGDIKHSRVARSDIAALKILGVKEIRVIAPRTLLPKGIERYGVKVFENIDEGVVDCDVLMGLRIQNERIGSPLMAASNEYFKKYGITPERVAKAKPDALVMHPGPMNRGVEIASSVADGPQSVILKQVNNGIAVRMAVLSMAMQGQREYQALRSST</sequence>
<organism>
    <name type="scientific">Psychrobacter sp. (strain PRwf-1)</name>
    <dbReference type="NCBI Taxonomy" id="349106"/>
    <lineage>
        <taxon>Bacteria</taxon>
        <taxon>Pseudomonadati</taxon>
        <taxon>Pseudomonadota</taxon>
        <taxon>Gammaproteobacteria</taxon>
        <taxon>Moraxellales</taxon>
        <taxon>Moraxellaceae</taxon>
        <taxon>Psychrobacter</taxon>
    </lineage>
</organism>
<comment type="function">
    <text evidence="1">Catalyzes the condensation of carbamoyl phosphate and aspartate to form carbamoyl aspartate and inorganic phosphate, the committed step in the de novo pyrimidine nucleotide biosynthesis pathway.</text>
</comment>
<comment type="catalytic activity">
    <reaction evidence="1">
        <text>carbamoyl phosphate + L-aspartate = N-carbamoyl-L-aspartate + phosphate + H(+)</text>
        <dbReference type="Rhea" id="RHEA:20013"/>
        <dbReference type="ChEBI" id="CHEBI:15378"/>
        <dbReference type="ChEBI" id="CHEBI:29991"/>
        <dbReference type="ChEBI" id="CHEBI:32814"/>
        <dbReference type="ChEBI" id="CHEBI:43474"/>
        <dbReference type="ChEBI" id="CHEBI:58228"/>
        <dbReference type="EC" id="2.1.3.2"/>
    </reaction>
</comment>
<comment type="pathway">
    <text evidence="1">Pyrimidine metabolism; UMP biosynthesis via de novo pathway; (S)-dihydroorotate from bicarbonate: step 2/3.</text>
</comment>
<comment type="subunit">
    <text evidence="1">Heterododecamer (2C3:3R2) of six catalytic PyrB chains organized as two trimers (C3), and six regulatory PyrI chains organized as three dimers (R2).</text>
</comment>
<comment type="similarity">
    <text evidence="1">Belongs to the aspartate/ornithine carbamoyltransferase superfamily. ATCase family.</text>
</comment>
<evidence type="ECO:0000255" key="1">
    <source>
        <dbReference type="HAMAP-Rule" id="MF_00001"/>
    </source>
</evidence>
<evidence type="ECO:0000256" key="2">
    <source>
        <dbReference type="SAM" id="MobiDB-lite"/>
    </source>
</evidence>
<accession>A5WGK5</accession>